<name>SOCS5_BOVIN</name>
<accession>Q29RN6</accession>
<dbReference type="EMBL" id="BC114096">
    <property type="protein sequence ID" value="AAI14097.1"/>
    <property type="molecule type" value="mRNA"/>
</dbReference>
<dbReference type="RefSeq" id="NP_001039647.1">
    <property type="nucleotide sequence ID" value="NM_001046182.1"/>
</dbReference>
<dbReference type="BMRB" id="Q29RN6"/>
<dbReference type="SMR" id="Q29RN6"/>
<dbReference type="FunCoup" id="Q29RN6">
    <property type="interactions" value="1585"/>
</dbReference>
<dbReference type="STRING" id="9913.ENSBTAP00000011826"/>
<dbReference type="PaxDb" id="9913-ENSBTAP00000011826"/>
<dbReference type="GeneID" id="514773"/>
<dbReference type="KEGG" id="bta:514773"/>
<dbReference type="CTD" id="9655"/>
<dbReference type="eggNOG" id="KOG4566">
    <property type="taxonomic scope" value="Eukaryota"/>
</dbReference>
<dbReference type="InParanoid" id="Q29RN6"/>
<dbReference type="OrthoDB" id="8820570at2759"/>
<dbReference type="UniPathway" id="UPA00143"/>
<dbReference type="Proteomes" id="UP000009136">
    <property type="component" value="Unplaced"/>
</dbReference>
<dbReference type="GO" id="GO:0007259">
    <property type="term" value="P:cell surface receptor signaling pathway via JAK-STAT"/>
    <property type="evidence" value="ECO:0007669"/>
    <property type="project" value="InterPro"/>
</dbReference>
<dbReference type="GO" id="GO:0019221">
    <property type="term" value="P:cytokine-mediated signaling pathway"/>
    <property type="evidence" value="ECO:0000318"/>
    <property type="project" value="GO_Central"/>
</dbReference>
<dbReference type="GO" id="GO:0007173">
    <property type="term" value="P:epidermal growth factor receptor signaling pathway"/>
    <property type="evidence" value="ECO:0007669"/>
    <property type="project" value="InterPro"/>
</dbReference>
<dbReference type="GO" id="GO:0035556">
    <property type="term" value="P:intracellular signal transduction"/>
    <property type="evidence" value="ECO:0007669"/>
    <property type="project" value="InterPro"/>
</dbReference>
<dbReference type="GO" id="GO:0007175">
    <property type="term" value="P:negative regulation of epidermal growth factor-activated receptor activity"/>
    <property type="evidence" value="ECO:0000250"/>
    <property type="project" value="UniProtKB"/>
</dbReference>
<dbReference type="GO" id="GO:0032436">
    <property type="term" value="P:positive regulation of proteasomal ubiquitin-dependent protein catabolic process"/>
    <property type="evidence" value="ECO:0007669"/>
    <property type="project" value="InterPro"/>
</dbReference>
<dbReference type="GO" id="GO:0016567">
    <property type="term" value="P:protein ubiquitination"/>
    <property type="evidence" value="ECO:0007669"/>
    <property type="project" value="UniProtKB-UniPathway"/>
</dbReference>
<dbReference type="CDD" id="cd03739">
    <property type="entry name" value="SOCS_SOCS5"/>
    <property type="match status" value="1"/>
</dbReference>
<dbReference type="FunFam" id="3.30.505.10:FF:000028">
    <property type="entry name" value="Suppressor of cytokine signaling 5"/>
    <property type="match status" value="1"/>
</dbReference>
<dbReference type="Gene3D" id="3.30.505.10">
    <property type="entry name" value="SH2 domain"/>
    <property type="match status" value="1"/>
</dbReference>
<dbReference type="InterPro" id="IPR000980">
    <property type="entry name" value="SH2"/>
</dbReference>
<dbReference type="InterPro" id="IPR036860">
    <property type="entry name" value="SH2_dom_sf"/>
</dbReference>
<dbReference type="InterPro" id="IPR022252">
    <property type="entry name" value="SOCS4/SOCS5_dom"/>
</dbReference>
<dbReference type="InterPro" id="IPR037343">
    <property type="entry name" value="SOCS5_SOCS"/>
</dbReference>
<dbReference type="InterPro" id="IPR001496">
    <property type="entry name" value="SOCS_box"/>
</dbReference>
<dbReference type="InterPro" id="IPR036036">
    <property type="entry name" value="SOCS_box-like_dom_sf"/>
</dbReference>
<dbReference type="PANTHER" id="PTHR10155">
    <property type="entry name" value="PHOSPHATIDYLINOSITOL 3-KINASE REGULATORY SUBUNIT"/>
    <property type="match status" value="1"/>
</dbReference>
<dbReference type="PANTHER" id="PTHR10155:SF15">
    <property type="entry name" value="SUPPRESSOR OF CYTOKINE SIGNALING 5"/>
    <property type="match status" value="1"/>
</dbReference>
<dbReference type="Pfam" id="PF00017">
    <property type="entry name" value="SH2"/>
    <property type="match status" value="1"/>
</dbReference>
<dbReference type="Pfam" id="PF12610">
    <property type="entry name" value="SOCS"/>
    <property type="match status" value="1"/>
</dbReference>
<dbReference type="Pfam" id="PF07525">
    <property type="entry name" value="SOCS_box"/>
    <property type="match status" value="1"/>
</dbReference>
<dbReference type="SMART" id="SM00252">
    <property type="entry name" value="SH2"/>
    <property type="match status" value="1"/>
</dbReference>
<dbReference type="SMART" id="SM00253">
    <property type="entry name" value="SOCS"/>
    <property type="match status" value="1"/>
</dbReference>
<dbReference type="SMART" id="SM00969">
    <property type="entry name" value="SOCS_box"/>
    <property type="match status" value="1"/>
</dbReference>
<dbReference type="SUPFAM" id="SSF55550">
    <property type="entry name" value="SH2 domain"/>
    <property type="match status" value="1"/>
</dbReference>
<dbReference type="SUPFAM" id="SSF158235">
    <property type="entry name" value="SOCS box-like"/>
    <property type="match status" value="1"/>
</dbReference>
<dbReference type="PROSITE" id="PS50001">
    <property type="entry name" value="SH2"/>
    <property type="match status" value="1"/>
</dbReference>
<dbReference type="PROSITE" id="PS50225">
    <property type="entry name" value="SOCS"/>
    <property type="match status" value="1"/>
</dbReference>
<gene>
    <name type="primary">SOCS5</name>
</gene>
<evidence type="ECO:0000250" key="1"/>
<evidence type="ECO:0000255" key="2">
    <source>
        <dbReference type="PROSITE-ProRule" id="PRU00191"/>
    </source>
</evidence>
<evidence type="ECO:0000255" key="3">
    <source>
        <dbReference type="PROSITE-ProRule" id="PRU00194"/>
    </source>
</evidence>
<evidence type="ECO:0000256" key="4">
    <source>
        <dbReference type="SAM" id="MobiDB-lite"/>
    </source>
</evidence>
<reference key="1">
    <citation type="submission" date="2006-02" db="EMBL/GenBank/DDBJ databases">
        <authorList>
            <consortium name="NIH - Mammalian Gene Collection (MGC) project"/>
        </authorList>
    </citation>
    <scope>NUCLEOTIDE SEQUENCE [LARGE SCALE MRNA]</scope>
    <source>
        <strain>Hereford</strain>
        <tissue>Hypothalamus</tissue>
    </source>
</reference>
<sequence length="536" mass="61172">MDKVGKMWNNFKYRCQNLFGHEGGSRSENVDMNSNRCLSVKKKNISLGDSAPQQQSSPLRENVALQLGLSPSKNSSRRNQNCAAEIPQIVEISIEKDNDSCVTPGTRLARRDSYSRHAPWGGKKKHSCSTKTQSSLDTDKKFGRTRSGLQRRERRYGVSSVHDMDSVSSRTVGSRSLRQRLQDTVGLCFPMRTYSKQSKPLFSNKRKIHLSELMLEKCPFPAGSDLAQKWHLIKQHTAPVSPHSTFFDTFDPSLVSTEDEEDRLRERRRLSIEEGVDPPPNAQIHTFEATAQVNPLYKLGPKLAPGMTEVNGDSCAVPQANCDSEEDTTTLCLQSRRQKQRQVSGDSHAHVSRQGAWKVHTQIDYIHCLVPDLLQITGNPCYWGVMDRYEAEALLEGKPEGTFLLRDSAQEDYLFSVSFRRYNRSLHARIEQWNHNFSFDAHDPCVFHSSTVTGLLEHYKDPSSCMFFEPLLTISLNRTFPFSLQYICRAVICRCTTYDGIDGLPLPSMLQDFLKEYHYKQKVRVRWLEREPVKAK</sequence>
<organism>
    <name type="scientific">Bos taurus</name>
    <name type="common">Bovine</name>
    <dbReference type="NCBI Taxonomy" id="9913"/>
    <lineage>
        <taxon>Eukaryota</taxon>
        <taxon>Metazoa</taxon>
        <taxon>Chordata</taxon>
        <taxon>Craniata</taxon>
        <taxon>Vertebrata</taxon>
        <taxon>Euteleostomi</taxon>
        <taxon>Mammalia</taxon>
        <taxon>Eutheria</taxon>
        <taxon>Laurasiatheria</taxon>
        <taxon>Artiodactyla</taxon>
        <taxon>Ruminantia</taxon>
        <taxon>Pecora</taxon>
        <taxon>Bovidae</taxon>
        <taxon>Bovinae</taxon>
        <taxon>Bos</taxon>
    </lineage>
</organism>
<keyword id="KW-0341">Growth regulation</keyword>
<keyword id="KW-1185">Reference proteome</keyword>
<keyword id="KW-0727">SH2 domain</keyword>
<keyword id="KW-0734">Signal transduction inhibitor</keyword>
<keyword id="KW-0833">Ubl conjugation pathway</keyword>
<feature type="chain" id="PRO_0000244382" description="Suppressor of cytokine signaling 5">
    <location>
        <begin position="1"/>
        <end position="536"/>
    </location>
</feature>
<feature type="domain" description="SH2" evidence="2">
    <location>
        <begin position="381"/>
        <end position="476"/>
    </location>
</feature>
<feature type="domain" description="SOCS box" evidence="3">
    <location>
        <begin position="471"/>
        <end position="520"/>
    </location>
</feature>
<feature type="region of interest" description="Required for interaction with IL4R" evidence="1">
    <location>
        <begin position="1"/>
        <end position="50"/>
    </location>
</feature>
<feature type="region of interest" description="Disordered" evidence="4">
    <location>
        <begin position="115"/>
        <end position="175"/>
    </location>
</feature>
<feature type="compositionally biased region" description="Low complexity" evidence="4">
    <location>
        <begin position="158"/>
        <end position="169"/>
    </location>
</feature>
<comment type="function">
    <text evidence="1">SOCS family proteins form part of a classical negative feedback system that regulates cytokine signal transduction. May be a substrate-recognition component of a SCF-like ECS (Elongin BC-CUL2/5-SOCS-box protein) E3 ubiquitin-protein ligase complex which mediates the ubiquitination and subsequent proteasomal degradation of target proteins. Inhibits for instance EGF signaling by mediating the degradation of the EGF receptor/EGFR. Involved in the regulation of T-helper cell differentiation by inhibiting of the IL4 signaling pathway which promotes differentiation into the Th2 phenotype. Can also partially inhibit IL6 and LIF signaling (By similarity).</text>
</comment>
<comment type="pathway">
    <text>Protein modification; protein ubiquitination.</text>
</comment>
<comment type="subunit">
    <text evidence="1">Interacts with EGFR. Interacts with ELOB and ELOC; mediates EGFR ubiquitination and degradation. Interacts with IL4R; inhibits IL4 signaling (By similarity).</text>
</comment>
<comment type="domain">
    <text evidence="1">The SOCS box domain mediates the interaction with the Elongin BC complex, an adapter module in different E3 ubiquitin ligase complexes.</text>
</comment>
<comment type="PTM">
    <text evidence="1">Phosphorylated. Phosphorylation is induced by EGF (By similarity).</text>
</comment>
<proteinExistence type="evidence at transcript level"/>
<protein>
    <recommendedName>
        <fullName>Suppressor of cytokine signaling 5</fullName>
        <shortName>SOCS-5</shortName>
    </recommendedName>
</protein>